<reference key="1">
    <citation type="journal article" date="1998" name="Nature">
        <title>Deciphering the biology of Mycobacterium tuberculosis from the complete genome sequence.</title>
        <authorList>
            <person name="Cole S.T."/>
            <person name="Brosch R."/>
            <person name="Parkhill J."/>
            <person name="Garnier T."/>
            <person name="Churcher C.M."/>
            <person name="Harris D.E."/>
            <person name="Gordon S.V."/>
            <person name="Eiglmeier K."/>
            <person name="Gas S."/>
            <person name="Barry C.E. III"/>
            <person name="Tekaia F."/>
            <person name="Badcock K."/>
            <person name="Basham D."/>
            <person name="Brown D."/>
            <person name="Chillingworth T."/>
            <person name="Connor R."/>
            <person name="Davies R.M."/>
            <person name="Devlin K."/>
            <person name="Feltwell T."/>
            <person name="Gentles S."/>
            <person name="Hamlin N."/>
            <person name="Holroyd S."/>
            <person name="Hornsby T."/>
            <person name="Jagels K."/>
            <person name="Krogh A."/>
            <person name="McLean J."/>
            <person name="Moule S."/>
            <person name="Murphy L.D."/>
            <person name="Oliver S."/>
            <person name="Osborne J."/>
            <person name="Quail M.A."/>
            <person name="Rajandream M.A."/>
            <person name="Rogers J."/>
            <person name="Rutter S."/>
            <person name="Seeger K."/>
            <person name="Skelton S."/>
            <person name="Squares S."/>
            <person name="Squares R."/>
            <person name="Sulston J.E."/>
            <person name="Taylor K."/>
            <person name="Whitehead S."/>
            <person name="Barrell B.G."/>
        </authorList>
    </citation>
    <scope>NUCLEOTIDE SEQUENCE [LARGE SCALE GENOMIC DNA]</scope>
    <source>
        <strain>ATCC 25618 / H37Rv</strain>
    </source>
</reference>
<reference key="2">
    <citation type="journal article" date="2011" name="Mol. Cell. Proteomics">
        <title>Proteogenomic analysis of Mycobacterium tuberculosis by high resolution mass spectrometry.</title>
        <authorList>
            <person name="Kelkar D.S."/>
            <person name="Kumar D."/>
            <person name="Kumar P."/>
            <person name="Balakrishnan L."/>
            <person name="Muthusamy B."/>
            <person name="Yadav A.K."/>
            <person name="Shrivastava P."/>
            <person name="Marimuthu A."/>
            <person name="Anand S."/>
            <person name="Sundaram H."/>
            <person name="Kingsbury R."/>
            <person name="Harsha H.C."/>
            <person name="Nair B."/>
            <person name="Prasad T.S."/>
            <person name="Chauhan D.S."/>
            <person name="Katoch K."/>
            <person name="Katoch V.M."/>
            <person name="Kumar P."/>
            <person name="Chaerkady R."/>
            <person name="Ramachandran S."/>
            <person name="Dash D."/>
            <person name="Pandey A."/>
        </authorList>
    </citation>
    <scope>IDENTIFICATION BY MASS SPECTROMETRY [LARGE SCALE ANALYSIS]</scope>
    <source>
        <strain>ATCC 25618 / H37Rv</strain>
    </source>
</reference>
<reference key="3">
    <citation type="submission" date="2009-02" db="PDB data bank">
        <title>Crystal structure of hypothetical protein Rv1636 from Mycobacterium tuberculosis H37Rv.</title>
        <authorList>
            <consortium name="New York structural genomix research consortium (NYSGXRC)"/>
        </authorList>
    </citation>
    <scope>X-RAY CRYSTALLOGRAPHY (2.4 ANGSTROMS) OF 2-146</scope>
</reference>
<gene>
    <name type="ordered locus">Rv1636</name>
    <name type="ORF">TB15.3</name>
</gene>
<dbReference type="EMBL" id="AL123456">
    <property type="protein sequence ID" value="CCP44400.1"/>
    <property type="molecule type" value="Genomic_DNA"/>
</dbReference>
<dbReference type="PIR" id="B70560">
    <property type="entry name" value="B70560"/>
</dbReference>
<dbReference type="RefSeq" id="NP_216152.1">
    <property type="nucleotide sequence ID" value="NC_000962.3"/>
</dbReference>
<dbReference type="RefSeq" id="WP_003408085.1">
    <property type="nucleotide sequence ID" value="NZ_NVQJ01000016.1"/>
</dbReference>
<dbReference type="PDB" id="1TQ8">
    <property type="method" value="X-ray"/>
    <property type="resolution" value="2.40 A"/>
    <property type="chains" value="A/B/C/D/E/F=2-146"/>
</dbReference>
<dbReference type="PDBsum" id="1TQ8"/>
<dbReference type="SMR" id="P9WFC9"/>
<dbReference type="FunCoup" id="P9WFC9">
    <property type="interactions" value="1"/>
</dbReference>
<dbReference type="STRING" id="83332.Rv1636"/>
<dbReference type="PaxDb" id="83332-Rv1636"/>
<dbReference type="DNASU" id="885473"/>
<dbReference type="GeneID" id="885473"/>
<dbReference type="KEGG" id="mtu:Rv1636"/>
<dbReference type="KEGG" id="mtv:RVBD_1636"/>
<dbReference type="TubercuList" id="Rv1636"/>
<dbReference type="eggNOG" id="COG0589">
    <property type="taxonomic scope" value="Bacteria"/>
</dbReference>
<dbReference type="InParanoid" id="P9WFC9"/>
<dbReference type="OrthoDB" id="3427787at2"/>
<dbReference type="PhylomeDB" id="P9WFC9"/>
<dbReference type="EvolutionaryTrace" id="P9WFC9"/>
<dbReference type="Proteomes" id="UP000001584">
    <property type="component" value="Chromosome"/>
</dbReference>
<dbReference type="GO" id="GO:0009274">
    <property type="term" value="C:peptidoglycan-based cell wall"/>
    <property type="evidence" value="ECO:0007005"/>
    <property type="project" value="MTBBASE"/>
</dbReference>
<dbReference type="GO" id="GO:0005886">
    <property type="term" value="C:plasma membrane"/>
    <property type="evidence" value="ECO:0007005"/>
    <property type="project" value="MTBBASE"/>
</dbReference>
<dbReference type="GO" id="GO:0046677">
    <property type="term" value="P:response to antibiotic"/>
    <property type="evidence" value="ECO:0000270"/>
    <property type="project" value="MTBBASE"/>
</dbReference>
<dbReference type="GO" id="GO:0006950">
    <property type="term" value="P:response to stress"/>
    <property type="evidence" value="ECO:0000318"/>
    <property type="project" value="GO_Central"/>
</dbReference>
<dbReference type="CDD" id="cd00293">
    <property type="entry name" value="USP-like"/>
    <property type="match status" value="1"/>
</dbReference>
<dbReference type="FunFam" id="3.40.50.620:FF:000257">
    <property type="entry name" value="Universal stress protein Rv1636"/>
    <property type="match status" value="1"/>
</dbReference>
<dbReference type="Gene3D" id="3.40.50.620">
    <property type="entry name" value="HUPs"/>
    <property type="match status" value="1"/>
</dbReference>
<dbReference type="InterPro" id="IPR014729">
    <property type="entry name" value="Rossmann-like_a/b/a_fold"/>
</dbReference>
<dbReference type="InterPro" id="IPR006015">
    <property type="entry name" value="Universal_stress_UspA"/>
</dbReference>
<dbReference type="InterPro" id="IPR006016">
    <property type="entry name" value="UspA"/>
</dbReference>
<dbReference type="PANTHER" id="PTHR46268">
    <property type="entry name" value="STRESS RESPONSE PROTEIN NHAX"/>
    <property type="match status" value="1"/>
</dbReference>
<dbReference type="PANTHER" id="PTHR46268:SF6">
    <property type="entry name" value="UNIVERSAL STRESS PROTEIN UP12"/>
    <property type="match status" value="1"/>
</dbReference>
<dbReference type="Pfam" id="PF00582">
    <property type="entry name" value="Usp"/>
    <property type="match status" value="1"/>
</dbReference>
<dbReference type="PRINTS" id="PR01438">
    <property type="entry name" value="UNVRSLSTRESS"/>
</dbReference>
<dbReference type="SUPFAM" id="SSF52402">
    <property type="entry name" value="Adenine nucleotide alpha hydrolases-like"/>
    <property type="match status" value="1"/>
</dbReference>
<protein>
    <recommendedName>
        <fullName>Universal stress protein Rv1636</fullName>
        <shortName>USP Rv1636</shortName>
    </recommendedName>
</protein>
<keyword id="KW-0002">3D-structure</keyword>
<keyword id="KW-1185">Reference proteome</keyword>
<proteinExistence type="evidence at protein level"/>
<evidence type="ECO:0000305" key="1"/>
<evidence type="ECO:0007829" key="2">
    <source>
        <dbReference type="PDB" id="1TQ8"/>
    </source>
</evidence>
<feature type="chain" id="PRO_0000396947" description="Universal stress protein Rv1636">
    <location>
        <begin position="1"/>
        <end position="146"/>
    </location>
</feature>
<feature type="strand" evidence="2">
    <location>
        <begin position="6"/>
        <end position="10"/>
    </location>
</feature>
<feature type="helix" evidence="2">
    <location>
        <begin position="15"/>
        <end position="28"/>
    </location>
</feature>
<feature type="turn" evidence="2">
    <location>
        <begin position="29"/>
        <end position="31"/>
    </location>
</feature>
<feature type="strand" evidence="2">
    <location>
        <begin position="32"/>
        <end position="39"/>
    </location>
</feature>
<feature type="helix" evidence="2">
    <location>
        <begin position="66"/>
        <end position="78"/>
    </location>
</feature>
<feature type="turn" evidence="2">
    <location>
        <begin position="79"/>
        <end position="81"/>
    </location>
</feature>
<feature type="strand" evidence="2">
    <location>
        <begin position="84"/>
        <end position="90"/>
    </location>
</feature>
<feature type="helix" evidence="2">
    <location>
        <begin position="94"/>
        <end position="104"/>
    </location>
</feature>
<feature type="strand" evidence="2">
    <location>
        <begin position="108"/>
        <end position="113"/>
    </location>
</feature>
<feature type="helix" evidence="2">
    <location>
        <begin position="120"/>
        <end position="124"/>
    </location>
</feature>
<feature type="helix" evidence="2">
    <location>
        <begin position="128"/>
        <end position="135"/>
    </location>
</feature>
<feature type="strand" evidence="2">
    <location>
        <begin position="139"/>
        <end position="143"/>
    </location>
</feature>
<organism>
    <name type="scientific">Mycobacterium tuberculosis (strain ATCC 25618 / H37Rv)</name>
    <dbReference type="NCBI Taxonomy" id="83332"/>
    <lineage>
        <taxon>Bacteria</taxon>
        <taxon>Bacillati</taxon>
        <taxon>Actinomycetota</taxon>
        <taxon>Actinomycetes</taxon>
        <taxon>Mycobacteriales</taxon>
        <taxon>Mycobacteriaceae</taxon>
        <taxon>Mycobacterium</taxon>
        <taxon>Mycobacterium tuberculosis complex</taxon>
    </lineage>
</organism>
<name>Y1636_MYCTU</name>
<accession>P9WFC9</accession>
<accession>L0T8U6</accession>
<accession>O06153</accession>
<accession>Q7D884</accession>
<comment type="similarity">
    <text evidence="1">Belongs to the universal stress protein A family.</text>
</comment>
<sequence length="146" mass="15312">MSAYKTVVVGTDGSDSSMRAVDRAAQIAGADAKLIIASAYLPQHEDARAADILKDESYKVTGTAPIYEILHDAKERAHNAGAKNVEERPIVGAPVDALVNLADEEKADLLVVGNVGLSTIAGRLLGSVPANVSRRAKVDVLIVHTT</sequence>